<reference key="1">
    <citation type="journal article" date="2007" name="Science">
        <title>The Calyptogena magnifica chemoautotrophic symbiont genome.</title>
        <authorList>
            <person name="Newton I.L.G."/>
            <person name="Woyke T."/>
            <person name="Auchtung T.A."/>
            <person name="Dilly G.F."/>
            <person name="Dutton R.J."/>
            <person name="Fisher M.C."/>
            <person name="Fontanez K.M."/>
            <person name="Lau E."/>
            <person name="Stewart F.J."/>
            <person name="Richardson P.M."/>
            <person name="Barry K.W."/>
            <person name="Saunders E."/>
            <person name="Detter J.C."/>
            <person name="Wu D."/>
            <person name="Eisen J.A."/>
            <person name="Cavanaugh C.M."/>
        </authorList>
    </citation>
    <scope>NUCLEOTIDE SEQUENCE [LARGE SCALE GENOMIC DNA]</scope>
</reference>
<feature type="chain" id="PRO_0000336942" description="7-cyano-7-deazaguanine synthase">
    <location>
        <begin position="1"/>
        <end position="230"/>
    </location>
</feature>
<feature type="binding site" evidence="1">
    <location>
        <begin position="14"/>
        <end position="24"/>
    </location>
    <ligand>
        <name>ATP</name>
        <dbReference type="ChEBI" id="CHEBI:30616"/>
    </ligand>
</feature>
<feature type="binding site" evidence="1">
    <location>
        <position position="194"/>
    </location>
    <ligand>
        <name>Zn(2+)</name>
        <dbReference type="ChEBI" id="CHEBI:29105"/>
    </ligand>
</feature>
<feature type="binding site" evidence="1">
    <location>
        <position position="204"/>
    </location>
    <ligand>
        <name>Zn(2+)</name>
        <dbReference type="ChEBI" id="CHEBI:29105"/>
    </ligand>
</feature>
<feature type="binding site" evidence="1">
    <location>
        <position position="207"/>
    </location>
    <ligand>
        <name>Zn(2+)</name>
        <dbReference type="ChEBI" id="CHEBI:29105"/>
    </ligand>
</feature>
<feature type="binding site" evidence="1">
    <location>
        <position position="210"/>
    </location>
    <ligand>
        <name>Zn(2+)</name>
        <dbReference type="ChEBI" id="CHEBI:29105"/>
    </ligand>
</feature>
<sequence length="230" mass="25692">MSNTRHKIKAVILLSGGLDSTTTLAIAKTKNFECYSLSFDYGQKQKSELKSAENFAKIFGSIKHRVMKISLSNIDFSALTDDKIDIPKFSKSDDIPITYVPARNTIFLSYALSWSEVLDCQHIFIGVNTLDYSGYPDCREIYIKAFEVMANLATKQSIEGKKLTIHTPLIHLNKAQIIKKGLSLGIDYSLTTTCYQADKSGKACGICDACEYRKLGFIEAKVADPTRYQI</sequence>
<comment type="function">
    <text evidence="1">Catalyzes the ATP-dependent conversion of 7-carboxy-7-deazaguanine (CDG) to 7-cyano-7-deazaguanine (preQ(0)).</text>
</comment>
<comment type="catalytic activity">
    <reaction evidence="1">
        <text>7-carboxy-7-deazaguanine + NH4(+) + ATP = 7-cyano-7-deazaguanine + ADP + phosphate + H2O + H(+)</text>
        <dbReference type="Rhea" id="RHEA:27982"/>
        <dbReference type="ChEBI" id="CHEBI:15377"/>
        <dbReference type="ChEBI" id="CHEBI:15378"/>
        <dbReference type="ChEBI" id="CHEBI:28938"/>
        <dbReference type="ChEBI" id="CHEBI:30616"/>
        <dbReference type="ChEBI" id="CHEBI:43474"/>
        <dbReference type="ChEBI" id="CHEBI:45075"/>
        <dbReference type="ChEBI" id="CHEBI:61036"/>
        <dbReference type="ChEBI" id="CHEBI:456216"/>
        <dbReference type="EC" id="6.3.4.20"/>
    </reaction>
</comment>
<comment type="cofactor">
    <cofactor evidence="1">
        <name>Zn(2+)</name>
        <dbReference type="ChEBI" id="CHEBI:29105"/>
    </cofactor>
    <text evidence="1">Binds 1 zinc ion per subunit.</text>
</comment>
<comment type="pathway">
    <text evidence="1">Purine metabolism; 7-cyano-7-deazaguanine biosynthesis.</text>
</comment>
<comment type="similarity">
    <text evidence="1">Belongs to the QueC family.</text>
</comment>
<dbReference type="EC" id="6.3.4.20" evidence="1"/>
<dbReference type="EMBL" id="CP000488">
    <property type="protein sequence ID" value="ABL02316.1"/>
    <property type="molecule type" value="Genomic_DNA"/>
</dbReference>
<dbReference type="RefSeq" id="WP_011737941.1">
    <property type="nucleotide sequence ID" value="NC_008610.1"/>
</dbReference>
<dbReference type="SMR" id="A1AWK9"/>
<dbReference type="STRING" id="413404.Rmag_0564"/>
<dbReference type="KEGG" id="rma:Rmag_0564"/>
<dbReference type="eggNOG" id="COG0603">
    <property type="taxonomic scope" value="Bacteria"/>
</dbReference>
<dbReference type="HOGENOM" id="CLU_081854_1_0_6"/>
<dbReference type="OrthoDB" id="9789567at2"/>
<dbReference type="UniPathway" id="UPA00391"/>
<dbReference type="Proteomes" id="UP000002587">
    <property type="component" value="Chromosome"/>
</dbReference>
<dbReference type="GO" id="GO:0005524">
    <property type="term" value="F:ATP binding"/>
    <property type="evidence" value="ECO:0007669"/>
    <property type="project" value="UniProtKB-UniRule"/>
</dbReference>
<dbReference type="GO" id="GO:0016879">
    <property type="term" value="F:ligase activity, forming carbon-nitrogen bonds"/>
    <property type="evidence" value="ECO:0007669"/>
    <property type="project" value="UniProtKB-UniRule"/>
</dbReference>
<dbReference type="GO" id="GO:0008270">
    <property type="term" value="F:zinc ion binding"/>
    <property type="evidence" value="ECO:0007669"/>
    <property type="project" value="UniProtKB-UniRule"/>
</dbReference>
<dbReference type="GO" id="GO:0008616">
    <property type="term" value="P:queuosine biosynthetic process"/>
    <property type="evidence" value="ECO:0007669"/>
    <property type="project" value="UniProtKB-UniRule"/>
</dbReference>
<dbReference type="CDD" id="cd01995">
    <property type="entry name" value="QueC-like"/>
    <property type="match status" value="1"/>
</dbReference>
<dbReference type="Gene3D" id="3.40.50.620">
    <property type="entry name" value="HUPs"/>
    <property type="match status" value="1"/>
</dbReference>
<dbReference type="HAMAP" id="MF_01633">
    <property type="entry name" value="QueC"/>
    <property type="match status" value="1"/>
</dbReference>
<dbReference type="InterPro" id="IPR018317">
    <property type="entry name" value="QueC"/>
</dbReference>
<dbReference type="InterPro" id="IPR014729">
    <property type="entry name" value="Rossmann-like_a/b/a_fold"/>
</dbReference>
<dbReference type="NCBIfam" id="TIGR00364">
    <property type="entry name" value="7-cyano-7-deazaguanine synthase QueC"/>
    <property type="match status" value="1"/>
</dbReference>
<dbReference type="PANTHER" id="PTHR42914">
    <property type="entry name" value="7-CYANO-7-DEAZAGUANINE SYNTHASE"/>
    <property type="match status" value="1"/>
</dbReference>
<dbReference type="PANTHER" id="PTHR42914:SF1">
    <property type="entry name" value="7-CYANO-7-DEAZAGUANINE SYNTHASE"/>
    <property type="match status" value="1"/>
</dbReference>
<dbReference type="Pfam" id="PF06508">
    <property type="entry name" value="QueC"/>
    <property type="match status" value="1"/>
</dbReference>
<dbReference type="PIRSF" id="PIRSF006293">
    <property type="entry name" value="ExsB"/>
    <property type="match status" value="1"/>
</dbReference>
<dbReference type="SUPFAM" id="SSF52402">
    <property type="entry name" value="Adenine nucleotide alpha hydrolases-like"/>
    <property type="match status" value="1"/>
</dbReference>
<organism>
    <name type="scientific">Ruthia magnifica subsp. Calyptogena magnifica</name>
    <dbReference type="NCBI Taxonomy" id="413404"/>
    <lineage>
        <taxon>Bacteria</taxon>
        <taxon>Pseudomonadati</taxon>
        <taxon>Pseudomonadota</taxon>
        <taxon>Gammaproteobacteria</taxon>
        <taxon>Candidatus Pseudothioglobaceae</taxon>
        <taxon>Candidatus Ruthturnera</taxon>
    </lineage>
</organism>
<accession>A1AWK9</accession>
<name>QUEC_RUTMC</name>
<gene>
    <name evidence="1" type="primary">queC</name>
    <name type="ordered locus">Rmag_0564</name>
</gene>
<keyword id="KW-0067">ATP-binding</keyword>
<keyword id="KW-0436">Ligase</keyword>
<keyword id="KW-0479">Metal-binding</keyword>
<keyword id="KW-0547">Nucleotide-binding</keyword>
<keyword id="KW-0671">Queuosine biosynthesis</keyword>
<keyword id="KW-0862">Zinc</keyword>
<proteinExistence type="inferred from homology"/>
<protein>
    <recommendedName>
        <fullName evidence="1">7-cyano-7-deazaguanine synthase</fullName>
        <ecNumber evidence="1">6.3.4.20</ecNumber>
    </recommendedName>
    <alternativeName>
        <fullName evidence="1">7-cyano-7-carbaguanine synthase</fullName>
    </alternativeName>
    <alternativeName>
        <fullName evidence="1">PreQ(0) synthase</fullName>
    </alternativeName>
    <alternativeName>
        <fullName evidence="1">Queuosine biosynthesis protein QueC</fullName>
    </alternativeName>
</protein>
<evidence type="ECO:0000255" key="1">
    <source>
        <dbReference type="HAMAP-Rule" id="MF_01633"/>
    </source>
</evidence>